<accession>Q1JK01</accession>
<proteinExistence type="inferred from homology"/>
<evidence type="ECO:0000255" key="1">
    <source>
        <dbReference type="HAMAP-Rule" id="MF_01574"/>
    </source>
</evidence>
<feature type="chain" id="PRO_0000260736" description="6-phospho-beta-galactosidase">
    <location>
        <begin position="1"/>
        <end position="468"/>
    </location>
</feature>
<feature type="active site" description="Proton donor" evidence="1">
    <location>
        <position position="160"/>
    </location>
</feature>
<feature type="active site" description="Nucleophile" evidence="1">
    <location>
        <position position="375"/>
    </location>
</feature>
<feature type="binding site" evidence="1">
    <location>
        <position position="19"/>
    </location>
    <ligand>
        <name>D-galactose 6-phosphate</name>
        <dbReference type="ChEBI" id="CHEBI:91004"/>
    </ligand>
</feature>
<feature type="binding site" evidence="1">
    <location>
        <position position="116"/>
    </location>
    <ligand>
        <name>D-galactose 6-phosphate</name>
        <dbReference type="ChEBI" id="CHEBI:91004"/>
    </ligand>
</feature>
<feature type="binding site" evidence="1">
    <location>
        <position position="159"/>
    </location>
    <ligand>
        <name>D-galactose 6-phosphate</name>
        <dbReference type="ChEBI" id="CHEBI:91004"/>
    </ligand>
</feature>
<feature type="binding site" evidence="1">
    <location>
        <position position="160"/>
    </location>
    <ligand>
        <name>D-galactose 6-phosphate</name>
        <dbReference type="ChEBI" id="CHEBI:91004"/>
    </ligand>
</feature>
<feature type="binding site" evidence="1">
    <location>
        <position position="297"/>
    </location>
    <ligand>
        <name>D-galactose 6-phosphate</name>
        <dbReference type="ChEBI" id="CHEBI:91004"/>
    </ligand>
</feature>
<feature type="binding site" evidence="1">
    <location>
        <position position="428"/>
    </location>
    <ligand>
        <name>D-galactose 6-phosphate</name>
        <dbReference type="ChEBI" id="CHEBI:91004"/>
    </ligand>
</feature>
<feature type="binding site" evidence="1">
    <location>
        <position position="429"/>
    </location>
    <ligand>
        <name>D-galactose 6-phosphate</name>
        <dbReference type="ChEBI" id="CHEBI:91004"/>
    </ligand>
</feature>
<feature type="binding site" evidence="1">
    <location>
        <position position="435"/>
    </location>
    <ligand>
        <name>D-galactose 6-phosphate</name>
        <dbReference type="ChEBI" id="CHEBI:91004"/>
    </ligand>
</feature>
<feature type="binding site" evidence="1">
    <location>
        <position position="437"/>
    </location>
    <ligand>
        <name>D-galactose 6-phosphate</name>
        <dbReference type="ChEBI" id="CHEBI:91004"/>
    </ligand>
</feature>
<organism>
    <name type="scientific">Streptococcus pyogenes serotype M12 (strain MGAS9429)</name>
    <dbReference type="NCBI Taxonomy" id="370551"/>
    <lineage>
        <taxon>Bacteria</taxon>
        <taxon>Bacillati</taxon>
        <taxon>Bacillota</taxon>
        <taxon>Bacilli</taxon>
        <taxon>Lactobacillales</taxon>
        <taxon>Streptococcaceae</taxon>
        <taxon>Streptococcus</taxon>
    </lineage>
</organism>
<gene>
    <name evidence="1" type="primary">lacG</name>
    <name type="ordered locus">MGAS9429_Spy1635</name>
</gene>
<protein>
    <recommendedName>
        <fullName evidence="1">6-phospho-beta-galactosidase</fullName>
        <ecNumber evidence="1">3.2.1.85</ecNumber>
    </recommendedName>
    <alternativeName>
        <fullName evidence="1">Beta-D-phosphogalactoside galactohydrolase</fullName>
        <shortName evidence="1">PGALase</shortName>
    </alternativeName>
    <alternativeName>
        <fullName evidence="1">P-beta-Gal</fullName>
        <shortName evidence="1">PBG</shortName>
    </alternativeName>
</protein>
<keyword id="KW-0326">Glycosidase</keyword>
<keyword id="KW-0378">Hydrolase</keyword>
<comment type="catalytic activity">
    <reaction evidence="1">
        <text>a 6-phospho-beta-D-galactoside + H2O = D-galactose 6-phosphate + an alcohol</text>
        <dbReference type="Rhea" id="RHEA:24568"/>
        <dbReference type="ChEBI" id="CHEBI:15377"/>
        <dbReference type="ChEBI" id="CHEBI:30879"/>
        <dbReference type="ChEBI" id="CHEBI:58534"/>
        <dbReference type="ChEBI" id="CHEBI:91004"/>
        <dbReference type="EC" id="3.2.1.85"/>
    </reaction>
</comment>
<comment type="pathway">
    <text evidence="1">Carbohydrate metabolism; lactose degradation; D-galactose 6-phosphate and beta-D-glucose from lactose 6-phosphate: step 1/1.</text>
</comment>
<comment type="similarity">
    <text evidence="1">Belongs to the glycosyl hydrolase 1 family.</text>
</comment>
<sequence length="468" mass="53811">MTKTLPKDFIFGGATAAYQAEGATHTDGKGPVAWDKYLEDNYWYTAEPASDFYNRYPVDLKLSEEFGVNGIRISIAWSRIFPTGKGEVNPKGVEYYHNLFAECHKRHVEPFVTLHHFDTPEALHSNGDFLNRENIEHFVNYAELCFKEFSEVNYWTTFNEIGPIGDGQYLVGKFPPGIQYDLAKVFQSHHNMMVSHARAVKLFKDSGYSGEIGVVHALPTKYPFDANNPDDVRAAELEDIIHNKFILDATYLGKYSDKTMEGVNHILEVNGGELDLREEDFAALDAAKDLNDFLGINYYMSDWMQAFDGETEIIHNGKGEKGSSKYQIKGVGRRKAPVDVPKTDWDWIIFPQGLYDQIMRVKADYPNYKKIYITENGLGYKDEFVDNTVYDDGRIDYVKKHLEVISDAISDGANVKGYFMWSLMDVFSWSNGYEKRYGLFYVDFETQERYPKKSAYWYKKVAETQVIE</sequence>
<name>LACG_STRPC</name>
<reference key="1">
    <citation type="journal article" date="2006" name="Proc. Natl. Acad. Sci. U.S.A.">
        <title>Molecular genetic anatomy of inter- and intraserotype variation in the human bacterial pathogen group A Streptococcus.</title>
        <authorList>
            <person name="Beres S.B."/>
            <person name="Richter E.W."/>
            <person name="Nagiec M.J."/>
            <person name="Sumby P."/>
            <person name="Porcella S.F."/>
            <person name="DeLeo F.R."/>
            <person name="Musser J.M."/>
        </authorList>
    </citation>
    <scope>NUCLEOTIDE SEQUENCE [LARGE SCALE GENOMIC DNA]</scope>
    <source>
        <strain>MGAS9429</strain>
    </source>
</reference>
<dbReference type="EC" id="3.2.1.85" evidence="1"/>
<dbReference type="EMBL" id="CP000259">
    <property type="protein sequence ID" value="ABF32822.1"/>
    <property type="molecule type" value="Genomic_DNA"/>
</dbReference>
<dbReference type="RefSeq" id="WP_002988094.1">
    <property type="nucleotide sequence ID" value="NC_008021.1"/>
</dbReference>
<dbReference type="SMR" id="Q1JK01"/>
<dbReference type="CAZy" id="GH1">
    <property type="family name" value="Glycoside Hydrolase Family 1"/>
</dbReference>
<dbReference type="KEGG" id="spk:MGAS9429_Spy1635"/>
<dbReference type="HOGENOM" id="CLU_001859_1_3_9"/>
<dbReference type="UniPathway" id="UPA00542">
    <property type="reaction ID" value="UER00605"/>
</dbReference>
<dbReference type="Proteomes" id="UP000002433">
    <property type="component" value="Chromosome"/>
</dbReference>
<dbReference type="GO" id="GO:0005829">
    <property type="term" value="C:cytosol"/>
    <property type="evidence" value="ECO:0007669"/>
    <property type="project" value="TreeGrafter"/>
</dbReference>
<dbReference type="GO" id="GO:0033920">
    <property type="term" value="F:6-phospho-beta-galactosidase activity"/>
    <property type="evidence" value="ECO:0007669"/>
    <property type="project" value="UniProtKB-UniRule"/>
</dbReference>
<dbReference type="GO" id="GO:0008422">
    <property type="term" value="F:beta-glucosidase activity"/>
    <property type="evidence" value="ECO:0007669"/>
    <property type="project" value="TreeGrafter"/>
</dbReference>
<dbReference type="GO" id="GO:0019512">
    <property type="term" value="P:lactose catabolic process via tagatose-6-phosphate"/>
    <property type="evidence" value="ECO:0007669"/>
    <property type="project" value="InterPro"/>
</dbReference>
<dbReference type="FunFam" id="3.20.20.80:FF:000004">
    <property type="entry name" value="Beta-glucosidase 6-phospho-beta-glucosidase"/>
    <property type="match status" value="1"/>
</dbReference>
<dbReference type="Gene3D" id="3.20.20.80">
    <property type="entry name" value="Glycosidases"/>
    <property type="match status" value="1"/>
</dbReference>
<dbReference type="HAMAP" id="MF_01574">
    <property type="entry name" value="LacG"/>
    <property type="match status" value="1"/>
</dbReference>
<dbReference type="InterPro" id="IPR005928">
    <property type="entry name" value="6P-beta-galactosidase"/>
</dbReference>
<dbReference type="InterPro" id="IPR001360">
    <property type="entry name" value="Glyco_hydro_1"/>
</dbReference>
<dbReference type="InterPro" id="IPR018120">
    <property type="entry name" value="Glyco_hydro_1_AS"/>
</dbReference>
<dbReference type="InterPro" id="IPR033132">
    <property type="entry name" value="Glyco_hydro_1_N_CS"/>
</dbReference>
<dbReference type="InterPro" id="IPR017853">
    <property type="entry name" value="Glycoside_hydrolase_SF"/>
</dbReference>
<dbReference type="NCBIfam" id="TIGR01233">
    <property type="entry name" value="lacG"/>
    <property type="match status" value="1"/>
</dbReference>
<dbReference type="NCBIfam" id="NF010036">
    <property type="entry name" value="PRK13511.1"/>
    <property type="match status" value="1"/>
</dbReference>
<dbReference type="PANTHER" id="PTHR10353">
    <property type="entry name" value="GLYCOSYL HYDROLASE"/>
    <property type="match status" value="1"/>
</dbReference>
<dbReference type="PANTHER" id="PTHR10353:SF36">
    <property type="entry name" value="LP05116P"/>
    <property type="match status" value="1"/>
</dbReference>
<dbReference type="Pfam" id="PF00232">
    <property type="entry name" value="Glyco_hydro_1"/>
    <property type="match status" value="1"/>
</dbReference>
<dbReference type="PRINTS" id="PR00131">
    <property type="entry name" value="GLHYDRLASE1"/>
</dbReference>
<dbReference type="SUPFAM" id="SSF51445">
    <property type="entry name" value="(Trans)glycosidases"/>
    <property type="match status" value="1"/>
</dbReference>
<dbReference type="PROSITE" id="PS00572">
    <property type="entry name" value="GLYCOSYL_HYDROL_F1_1"/>
    <property type="match status" value="1"/>
</dbReference>
<dbReference type="PROSITE" id="PS00653">
    <property type="entry name" value="GLYCOSYL_HYDROL_F1_2"/>
    <property type="match status" value="1"/>
</dbReference>